<protein>
    <recommendedName>
        <fullName>Neurocalcin-delta</fullName>
    </recommendedName>
</protein>
<organism>
    <name type="scientific">Mus musculus</name>
    <name type="common">Mouse</name>
    <dbReference type="NCBI Taxonomy" id="10090"/>
    <lineage>
        <taxon>Eukaryota</taxon>
        <taxon>Metazoa</taxon>
        <taxon>Chordata</taxon>
        <taxon>Craniata</taxon>
        <taxon>Vertebrata</taxon>
        <taxon>Euteleostomi</taxon>
        <taxon>Mammalia</taxon>
        <taxon>Eutheria</taxon>
        <taxon>Euarchontoglires</taxon>
        <taxon>Glires</taxon>
        <taxon>Rodentia</taxon>
        <taxon>Myomorpha</taxon>
        <taxon>Muroidea</taxon>
        <taxon>Muridae</taxon>
        <taxon>Murinae</taxon>
        <taxon>Mus</taxon>
        <taxon>Mus</taxon>
    </lineage>
</organism>
<evidence type="ECO:0000250" key="1"/>
<evidence type="ECO:0000250" key="2">
    <source>
        <dbReference type="UniProtKB" id="Q5PQN0"/>
    </source>
</evidence>
<evidence type="ECO:0000255" key="3">
    <source>
        <dbReference type="PROSITE-ProRule" id="PRU00448"/>
    </source>
</evidence>
<evidence type="ECO:0000305" key="4"/>
<dbReference type="EMBL" id="AK034031">
    <property type="protein sequence ID" value="BAC28553.1"/>
    <property type="molecule type" value="mRNA"/>
</dbReference>
<dbReference type="EMBL" id="AK048440">
    <property type="protein sequence ID" value="BAC33338.1"/>
    <property type="molecule type" value="mRNA"/>
</dbReference>
<dbReference type="EMBL" id="AK167313">
    <property type="protein sequence ID" value="BAE39416.1"/>
    <property type="molecule type" value="mRNA"/>
</dbReference>
<dbReference type="EMBL" id="BC011162">
    <property type="protein sequence ID" value="AAH11162.1"/>
    <property type="molecule type" value="mRNA"/>
</dbReference>
<dbReference type="EMBL" id="BC026979">
    <property type="protein sequence ID" value="AAH26979.1"/>
    <property type="molecule type" value="mRNA"/>
</dbReference>
<dbReference type="CCDS" id="CCDS27435.1"/>
<dbReference type="RefSeq" id="NP_001164337.1">
    <property type="nucleotide sequence ID" value="NM_001170866.1"/>
</dbReference>
<dbReference type="RefSeq" id="NP_001164338.1">
    <property type="nucleotide sequence ID" value="NM_001170867.1"/>
</dbReference>
<dbReference type="RefSeq" id="NP_001164339.1">
    <property type="nucleotide sequence ID" value="NM_001170868.1"/>
</dbReference>
<dbReference type="RefSeq" id="NP_001346768.1">
    <property type="nucleotide sequence ID" value="NM_001359839.1"/>
</dbReference>
<dbReference type="RefSeq" id="NP_001346769.1">
    <property type="nucleotide sequence ID" value="NM_001359840.1"/>
</dbReference>
<dbReference type="RefSeq" id="NP_001346770.1">
    <property type="nucleotide sequence ID" value="NM_001359841.1"/>
</dbReference>
<dbReference type="RefSeq" id="NP_001346771.1">
    <property type="nucleotide sequence ID" value="NM_001359842.1"/>
</dbReference>
<dbReference type="RefSeq" id="NP_001346772.1">
    <property type="nucleotide sequence ID" value="NM_001359843.1"/>
</dbReference>
<dbReference type="RefSeq" id="NP_001346773.1">
    <property type="nucleotide sequence ID" value="NM_001359844.1"/>
</dbReference>
<dbReference type="RefSeq" id="NP_001346774.1">
    <property type="nucleotide sequence ID" value="NM_001359845.1"/>
</dbReference>
<dbReference type="RefSeq" id="NP_598855.2">
    <property type="nucleotide sequence ID" value="NM_134094.4"/>
</dbReference>
<dbReference type="RefSeq" id="XP_006520170.1">
    <property type="nucleotide sequence ID" value="XM_006520107.3"/>
</dbReference>
<dbReference type="RefSeq" id="XP_006520171.1">
    <property type="nucleotide sequence ID" value="XM_006520108.1"/>
</dbReference>
<dbReference type="RefSeq" id="XP_006520172.1">
    <property type="nucleotide sequence ID" value="XM_006520109.2"/>
</dbReference>
<dbReference type="RefSeq" id="XP_006520174.1">
    <property type="nucleotide sequence ID" value="XM_006520111.3"/>
</dbReference>
<dbReference type="RefSeq" id="XP_006520175.1">
    <property type="nucleotide sequence ID" value="XM_006520112.4"/>
</dbReference>
<dbReference type="RefSeq" id="XP_006520176.1">
    <property type="nucleotide sequence ID" value="XM_006520113.5"/>
</dbReference>
<dbReference type="RefSeq" id="XP_011243664.1">
    <property type="nucleotide sequence ID" value="XM_011245362.3"/>
</dbReference>
<dbReference type="RefSeq" id="XP_011243665.1">
    <property type="nucleotide sequence ID" value="XM_011245363.2"/>
</dbReference>
<dbReference type="RefSeq" id="XP_011243666.1">
    <property type="nucleotide sequence ID" value="XM_011245364.4"/>
</dbReference>
<dbReference type="RefSeq" id="XP_011243667.1">
    <property type="nucleotide sequence ID" value="XM_011245365.2"/>
</dbReference>
<dbReference type="RefSeq" id="XP_011243668.1">
    <property type="nucleotide sequence ID" value="XM_011245366.3"/>
</dbReference>
<dbReference type="RefSeq" id="XP_017172180.1">
    <property type="nucleotide sequence ID" value="XM_017316691.1"/>
</dbReference>
<dbReference type="RefSeq" id="XP_017172181.1">
    <property type="nucleotide sequence ID" value="XM_017316692.1"/>
</dbReference>
<dbReference type="RefSeq" id="XP_017172182.1">
    <property type="nucleotide sequence ID" value="XM_017316693.2"/>
</dbReference>
<dbReference type="RefSeq" id="XP_017172183.1">
    <property type="nucleotide sequence ID" value="XM_017316694.1"/>
</dbReference>
<dbReference type="RefSeq" id="XP_017172184.1">
    <property type="nucleotide sequence ID" value="XM_017316695.1"/>
</dbReference>
<dbReference type="RefSeq" id="XP_017172185.1">
    <property type="nucleotide sequence ID" value="XM_017316696.1"/>
</dbReference>
<dbReference type="RefSeq" id="XP_017172186.1">
    <property type="nucleotide sequence ID" value="XM_017316697.1"/>
</dbReference>
<dbReference type="RefSeq" id="XP_030104502.1">
    <property type="nucleotide sequence ID" value="XM_030248642.2"/>
</dbReference>
<dbReference type="RefSeq" id="XP_030104503.1">
    <property type="nucleotide sequence ID" value="XM_030248643.1"/>
</dbReference>
<dbReference type="RefSeq" id="XP_030104504.1">
    <property type="nucleotide sequence ID" value="XM_030248644.2"/>
</dbReference>
<dbReference type="RefSeq" id="XP_030104505.1">
    <property type="nucleotide sequence ID" value="XM_030248645.2"/>
</dbReference>
<dbReference type="RefSeq" id="XP_030104506.1">
    <property type="nucleotide sequence ID" value="XM_030248646.2"/>
</dbReference>
<dbReference type="RefSeq" id="XP_030104507.1">
    <property type="nucleotide sequence ID" value="XM_030248647.2"/>
</dbReference>
<dbReference type="RefSeq" id="XP_030104508.1">
    <property type="nucleotide sequence ID" value="XM_030248648.2"/>
</dbReference>
<dbReference type="RefSeq" id="XP_030104509.1">
    <property type="nucleotide sequence ID" value="XM_030248649.1"/>
</dbReference>
<dbReference type="RefSeq" id="XP_030104510.1">
    <property type="nucleotide sequence ID" value="XM_030248650.2"/>
</dbReference>
<dbReference type="RefSeq" id="XP_030104511.1">
    <property type="nucleotide sequence ID" value="XM_030248651.2"/>
</dbReference>
<dbReference type="RefSeq" id="XP_030104512.1">
    <property type="nucleotide sequence ID" value="XM_030248652.1"/>
</dbReference>
<dbReference type="RefSeq" id="XP_030104513.1">
    <property type="nucleotide sequence ID" value="XM_030248653.1"/>
</dbReference>
<dbReference type="RefSeq" id="XP_030104514.1">
    <property type="nucleotide sequence ID" value="XM_030248654.2"/>
</dbReference>
<dbReference type="RefSeq" id="XP_030104516.1">
    <property type="nucleotide sequence ID" value="XM_030248656.2"/>
</dbReference>
<dbReference type="RefSeq" id="XP_036015379.1">
    <property type="nucleotide sequence ID" value="XM_036159486.1"/>
</dbReference>
<dbReference type="RefSeq" id="XP_036015380.1">
    <property type="nucleotide sequence ID" value="XM_036159487.1"/>
</dbReference>
<dbReference type="RefSeq" id="XP_036015381.1">
    <property type="nucleotide sequence ID" value="XM_036159488.1"/>
</dbReference>
<dbReference type="RefSeq" id="XP_036015382.1">
    <property type="nucleotide sequence ID" value="XM_036159489.1"/>
</dbReference>
<dbReference type="RefSeq" id="XP_036015383.1">
    <property type="nucleotide sequence ID" value="XM_036159490.1"/>
</dbReference>
<dbReference type="RefSeq" id="XP_036015384.1">
    <property type="nucleotide sequence ID" value="XM_036159491.1"/>
</dbReference>
<dbReference type="RefSeq" id="XP_036015385.1">
    <property type="nucleotide sequence ID" value="XM_036159492.1"/>
</dbReference>
<dbReference type="RefSeq" id="XP_036015386.1">
    <property type="nucleotide sequence ID" value="XM_036159493.1"/>
</dbReference>
<dbReference type="RefSeq" id="XP_036015387.1">
    <property type="nucleotide sequence ID" value="XM_036159494.1"/>
</dbReference>
<dbReference type="RefSeq" id="XP_036015389.1">
    <property type="nucleotide sequence ID" value="XM_036159496.1"/>
</dbReference>
<dbReference type="RefSeq" id="XP_036015390.1">
    <property type="nucleotide sequence ID" value="XM_036159497.1"/>
</dbReference>
<dbReference type="RefSeq" id="XP_036015391.1">
    <property type="nucleotide sequence ID" value="XM_036159498.1"/>
</dbReference>
<dbReference type="RefSeq" id="XP_036015392.1">
    <property type="nucleotide sequence ID" value="XM_036159499.1"/>
</dbReference>
<dbReference type="RefSeq" id="XP_036015393.1">
    <property type="nucleotide sequence ID" value="XM_036159500.1"/>
</dbReference>
<dbReference type="RefSeq" id="XP_036015394.1">
    <property type="nucleotide sequence ID" value="XM_036159501.1"/>
</dbReference>
<dbReference type="RefSeq" id="XP_036015395.1">
    <property type="nucleotide sequence ID" value="XM_036159502.1"/>
</dbReference>
<dbReference type="SMR" id="Q91X97"/>
<dbReference type="BioGRID" id="206679">
    <property type="interactions" value="6"/>
</dbReference>
<dbReference type="FunCoup" id="Q91X97">
    <property type="interactions" value="1736"/>
</dbReference>
<dbReference type="IntAct" id="Q91X97">
    <property type="interactions" value="1"/>
</dbReference>
<dbReference type="STRING" id="10090.ENSMUSP00000087611"/>
<dbReference type="iPTMnet" id="Q91X97"/>
<dbReference type="PhosphoSitePlus" id="Q91X97"/>
<dbReference type="SwissPalm" id="Q91X97"/>
<dbReference type="PaxDb" id="10090-ENSMUSP00000087611"/>
<dbReference type="PeptideAtlas" id="Q91X97"/>
<dbReference type="ProteomicsDB" id="287618"/>
<dbReference type="Antibodypedia" id="42836">
    <property type="antibodies" value="173 antibodies from 27 providers"/>
</dbReference>
<dbReference type="DNASU" id="52589"/>
<dbReference type="Ensembl" id="ENSMUST00000090150.11">
    <property type="protein sequence ID" value="ENSMUSP00000087611.5"/>
    <property type="gene ID" value="ENSMUSG00000051359.16"/>
</dbReference>
<dbReference type="Ensembl" id="ENSMUST00000116445.9">
    <property type="protein sequence ID" value="ENSMUSP00000112146.3"/>
    <property type="gene ID" value="ENSMUSG00000051359.16"/>
</dbReference>
<dbReference type="Ensembl" id="ENSMUST00000119730.8">
    <property type="protein sequence ID" value="ENSMUSP00000113858.2"/>
    <property type="gene ID" value="ENSMUSG00000051359.16"/>
</dbReference>
<dbReference type="Ensembl" id="ENSMUST00000120746.8">
    <property type="protein sequence ID" value="ENSMUSP00000112898.2"/>
    <property type="gene ID" value="ENSMUSG00000051359.16"/>
</dbReference>
<dbReference type="Ensembl" id="ENSMUST00000168992.8">
    <property type="protein sequence ID" value="ENSMUSP00000130126.2"/>
    <property type="gene ID" value="ENSMUSG00000051359.16"/>
</dbReference>
<dbReference type="GeneID" id="52589"/>
<dbReference type="KEGG" id="mmu:52589"/>
<dbReference type="UCSC" id="uc007vng.2">
    <property type="organism name" value="mouse"/>
</dbReference>
<dbReference type="AGR" id="MGI:1196326"/>
<dbReference type="CTD" id="83988"/>
<dbReference type="MGI" id="MGI:1196326">
    <property type="gene designation" value="Ncald"/>
</dbReference>
<dbReference type="VEuPathDB" id="HostDB:ENSMUSG00000051359"/>
<dbReference type="eggNOG" id="KOG0044">
    <property type="taxonomic scope" value="Eukaryota"/>
</dbReference>
<dbReference type="GeneTree" id="ENSGT00940000158862"/>
<dbReference type="InParanoid" id="Q91X97"/>
<dbReference type="OMA" id="MGCVCMK"/>
<dbReference type="OrthoDB" id="191686at2759"/>
<dbReference type="PhylomeDB" id="Q91X97"/>
<dbReference type="TreeFam" id="TF300009"/>
<dbReference type="Reactome" id="R-MMU-451308">
    <property type="pathway name" value="Activation of Ca-permeable Kainate Receptor"/>
</dbReference>
<dbReference type="BioGRID-ORCS" id="52589">
    <property type="hits" value="1 hit in 78 CRISPR screens"/>
</dbReference>
<dbReference type="CD-CODE" id="CE726F99">
    <property type="entry name" value="Postsynaptic density"/>
</dbReference>
<dbReference type="ChiTaRS" id="Ncald">
    <property type="organism name" value="mouse"/>
</dbReference>
<dbReference type="PRO" id="PR:Q91X97"/>
<dbReference type="Proteomes" id="UP000000589">
    <property type="component" value="Chromosome 15"/>
</dbReference>
<dbReference type="RNAct" id="Q91X97">
    <property type="molecule type" value="protein"/>
</dbReference>
<dbReference type="Bgee" id="ENSMUSG00000051359">
    <property type="expression patterns" value="Expressed in lateral septal nucleus and 254 other cell types or tissues"/>
</dbReference>
<dbReference type="ExpressionAtlas" id="Q91X97">
    <property type="expression patterns" value="baseline and differential"/>
</dbReference>
<dbReference type="GO" id="GO:0003779">
    <property type="term" value="F:actin binding"/>
    <property type="evidence" value="ECO:0007669"/>
    <property type="project" value="Ensembl"/>
</dbReference>
<dbReference type="GO" id="GO:0043014">
    <property type="term" value="F:alpha-tubulin binding"/>
    <property type="evidence" value="ECO:0007669"/>
    <property type="project" value="Ensembl"/>
</dbReference>
<dbReference type="GO" id="GO:0005509">
    <property type="term" value="F:calcium ion binding"/>
    <property type="evidence" value="ECO:0007669"/>
    <property type="project" value="InterPro"/>
</dbReference>
<dbReference type="GO" id="GO:0030276">
    <property type="term" value="F:clathrin binding"/>
    <property type="evidence" value="ECO:0007669"/>
    <property type="project" value="Ensembl"/>
</dbReference>
<dbReference type="GO" id="GO:0019722">
    <property type="term" value="P:calcium-mediated signaling"/>
    <property type="evidence" value="ECO:0000315"/>
    <property type="project" value="MGI"/>
</dbReference>
<dbReference type="GO" id="GO:0003073">
    <property type="term" value="P:regulation of systemic arterial blood pressure"/>
    <property type="evidence" value="ECO:0000315"/>
    <property type="project" value="MGI"/>
</dbReference>
<dbReference type="CDD" id="cd00051">
    <property type="entry name" value="EFh"/>
    <property type="match status" value="2"/>
</dbReference>
<dbReference type="FunFam" id="1.10.238.10:FF:000009">
    <property type="entry name" value="Visinin-like protein 1"/>
    <property type="match status" value="1"/>
</dbReference>
<dbReference type="Gene3D" id="1.10.238.10">
    <property type="entry name" value="EF-hand"/>
    <property type="match status" value="1"/>
</dbReference>
<dbReference type="InterPro" id="IPR011992">
    <property type="entry name" value="EF-hand-dom_pair"/>
</dbReference>
<dbReference type="InterPro" id="IPR018247">
    <property type="entry name" value="EF_Hand_1_Ca_BS"/>
</dbReference>
<dbReference type="InterPro" id="IPR002048">
    <property type="entry name" value="EF_hand_dom"/>
</dbReference>
<dbReference type="InterPro" id="IPR028846">
    <property type="entry name" value="Recoverin"/>
</dbReference>
<dbReference type="PANTHER" id="PTHR23055">
    <property type="entry name" value="CALCIUM BINDING PROTEINS"/>
    <property type="match status" value="1"/>
</dbReference>
<dbReference type="PANTHER" id="PTHR23055:SF87">
    <property type="entry name" value="NEUROCALCIN-DELTA"/>
    <property type="match status" value="1"/>
</dbReference>
<dbReference type="Pfam" id="PF00036">
    <property type="entry name" value="EF-hand_1"/>
    <property type="match status" value="1"/>
</dbReference>
<dbReference type="Pfam" id="PF13499">
    <property type="entry name" value="EF-hand_7"/>
    <property type="match status" value="1"/>
</dbReference>
<dbReference type="PRINTS" id="PR00450">
    <property type="entry name" value="RECOVERIN"/>
</dbReference>
<dbReference type="SMART" id="SM00054">
    <property type="entry name" value="EFh"/>
    <property type="match status" value="3"/>
</dbReference>
<dbReference type="SUPFAM" id="SSF47473">
    <property type="entry name" value="EF-hand"/>
    <property type="match status" value="1"/>
</dbReference>
<dbReference type="PROSITE" id="PS00018">
    <property type="entry name" value="EF_HAND_1"/>
    <property type="match status" value="3"/>
</dbReference>
<dbReference type="PROSITE" id="PS50222">
    <property type="entry name" value="EF_HAND_2"/>
    <property type="match status" value="4"/>
</dbReference>
<feature type="initiator methionine" description="Removed">
    <location>
        <position position="1"/>
    </location>
</feature>
<feature type="chain" id="PRO_0000073783" description="Neurocalcin-delta">
    <location>
        <begin position="2"/>
        <end position="193"/>
    </location>
</feature>
<feature type="domain" description="EF-hand 1" evidence="3">
    <location>
        <begin position="40"/>
        <end position="58"/>
    </location>
</feature>
<feature type="domain" description="EF-hand 2" evidence="3">
    <location>
        <begin position="60"/>
        <end position="95"/>
    </location>
</feature>
<feature type="domain" description="EF-hand 3" evidence="3">
    <location>
        <begin position="96"/>
        <end position="131"/>
    </location>
</feature>
<feature type="domain" description="EF-hand 4" evidence="3">
    <location>
        <begin position="144"/>
        <end position="179"/>
    </location>
</feature>
<feature type="binding site" evidence="3">
    <location>
        <position position="73"/>
    </location>
    <ligand>
        <name>Ca(2+)</name>
        <dbReference type="ChEBI" id="CHEBI:29108"/>
        <label>1</label>
    </ligand>
</feature>
<feature type="binding site" evidence="3">
    <location>
        <position position="75"/>
    </location>
    <ligand>
        <name>Ca(2+)</name>
        <dbReference type="ChEBI" id="CHEBI:29108"/>
        <label>1</label>
    </ligand>
</feature>
<feature type="binding site" evidence="3">
    <location>
        <position position="77"/>
    </location>
    <ligand>
        <name>Ca(2+)</name>
        <dbReference type="ChEBI" id="CHEBI:29108"/>
        <label>1</label>
    </ligand>
</feature>
<feature type="binding site" evidence="3">
    <location>
        <position position="79"/>
    </location>
    <ligand>
        <name>Ca(2+)</name>
        <dbReference type="ChEBI" id="CHEBI:29108"/>
        <label>1</label>
    </ligand>
</feature>
<feature type="binding site" evidence="3">
    <location>
        <position position="84"/>
    </location>
    <ligand>
        <name>Ca(2+)</name>
        <dbReference type="ChEBI" id="CHEBI:29108"/>
        <label>1</label>
    </ligand>
</feature>
<feature type="binding site" evidence="3">
    <location>
        <position position="109"/>
    </location>
    <ligand>
        <name>Ca(2+)</name>
        <dbReference type="ChEBI" id="CHEBI:29108"/>
        <label>2</label>
    </ligand>
</feature>
<feature type="binding site" evidence="3">
    <location>
        <position position="111"/>
    </location>
    <ligand>
        <name>Ca(2+)</name>
        <dbReference type="ChEBI" id="CHEBI:29108"/>
        <label>2</label>
    </ligand>
</feature>
<feature type="binding site" evidence="3">
    <location>
        <position position="113"/>
    </location>
    <ligand>
        <name>Ca(2+)</name>
        <dbReference type="ChEBI" id="CHEBI:29108"/>
        <label>2</label>
    </ligand>
</feature>
<feature type="binding site" evidence="3">
    <location>
        <position position="115"/>
    </location>
    <ligand>
        <name>Ca(2+)</name>
        <dbReference type="ChEBI" id="CHEBI:29108"/>
        <label>2</label>
    </ligand>
</feature>
<feature type="binding site" evidence="3">
    <location>
        <position position="120"/>
    </location>
    <ligand>
        <name>Ca(2+)</name>
        <dbReference type="ChEBI" id="CHEBI:29108"/>
        <label>2</label>
    </ligand>
</feature>
<feature type="binding site" evidence="3">
    <location>
        <position position="157"/>
    </location>
    <ligand>
        <name>Ca(2+)</name>
        <dbReference type="ChEBI" id="CHEBI:29108"/>
        <label>3</label>
    </ligand>
</feature>
<feature type="binding site" evidence="3">
    <location>
        <position position="159"/>
    </location>
    <ligand>
        <name>Ca(2+)</name>
        <dbReference type="ChEBI" id="CHEBI:29108"/>
        <label>3</label>
    </ligand>
</feature>
<feature type="binding site" evidence="3">
    <location>
        <position position="161"/>
    </location>
    <ligand>
        <name>Ca(2+)</name>
        <dbReference type="ChEBI" id="CHEBI:29108"/>
        <label>3</label>
    </ligand>
</feature>
<feature type="binding site" evidence="3">
    <location>
        <position position="163"/>
    </location>
    <ligand>
        <name>Ca(2+)</name>
        <dbReference type="ChEBI" id="CHEBI:29108"/>
        <label>3</label>
    </ligand>
</feature>
<feature type="binding site" evidence="3">
    <location>
        <position position="168"/>
    </location>
    <ligand>
        <name>Ca(2+)</name>
        <dbReference type="ChEBI" id="CHEBI:29108"/>
        <label>3</label>
    </ligand>
</feature>
<feature type="lipid moiety-binding region" description="N-myristoyl glycine" evidence="1">
    <location>
        <position position="2"/>
    </location>
</feature>
<feature type="sequence conflict" description="In Ref. 2; AAH11162." evidence="4" ref="2">
    <original>K</original>
    <variation>N</variation>
    <location>
        <position position="151"/>
    </location>
</feature>
<feature type="sequence conflict" description="In Ref. 1; BAC28553." evidence="4" ref="1">
    <original>D</original>
    <variation>N</variation>
    <location>
        <position position="186"/>
    </location>
</feature>
<comment type="function">
    <text evidence="1">May be involved in the calcium-dependent regulation of rhodopsin phosphorylation. Binds three calcium ions (By similarity).</text>
</comment>
<comment type="subunit">
    <text evidence="2">Interacts with GUCY2D.</text>
</comment>
<comment type="similarity">
    <text evidence="4">Belongs to the recoverin family.</text>
</comment>
<proteinExistence type="evidence at protein level"/>
<reference key="1">
    <citation type="journal article" date="2005" name="Science">
        <title>The transcriptional landscape of the mammalian genome.</title>
        <authorList>
            <person name="Carninci P."/>
            <person name="Kasukawa T."/>
            <person name="Katayama S."/>
            <person name="Gough J."/>
            <person name="Frith M.C."/>
            <person name="Maeda N."/>
            <person name="Oyama R."/>
            <person name="Ravasi T."/>
            <person name="Lenhard B."/>
            <person name="Wells C."/>
            <person name="Kodzius R."/>
            <person name="Shimokawa K."/>
            <person name="Bajic V.B."/>
            <person name="Brenner S.E."/>
            <person name="Batalov S."/>
            <person name="Forrest A.R."/>
            <person name="Zavolan M."/>
            <person name="Davis M.J."/>
            <person name="Wilming L.G."/>
            <person name="Aidinis V."/>
            <person name="Allen J.E."/>
            <person name="Ambesi-Impiombato A."/>
            <person name="Apweiler R."/>
            <person name="Aturaliya R.N."/>
            <person name="Bailey T.L."/>
            <person name="Bansal M."/>
            <person name="Baxter L."/>
            <person name="Beisel K.W."/>
            <person name="Bersano T."/>
            <person name="Bono H."/>
            <person name="Chalk A.M."/>
            <person name="Chiu K.P."/>
            <person name="Choudhary V."/>
            <person name="Christoffels A."/>
            <person name="Clutterbuck D.R."/>
            <person name="Crowe M.L."/>
            <person name="Dalla E."/>
            <person name="Dalrymple B.P."/>
            <person name="de Bono B."/>
            <person name="Della Gatta G."/>
            <person name="di Bernardo D."/>
            <person name="Down T."/>
            <person name="Engstrom P."/>
            <person name="Fagiolini M."/>
            <person name="Faulkner G."/>
            <person name="Fletcher C.F."/>
            <person name="Fukushima T."/>
            <person name="Furuno M."/>
            <person name="Futaki S."/>
            <person name="Gariboldi M."/>
            <person name="Georgii-Hemming P."/>
            <person name="Gingeras T.R."/>
            <person name="Gojobori T."/>
            <person name="Green R.E."/>
            <person name="Gustincich S."/>
            <person name="Harbers M."/>
            <person name="Hayashi Y."/>
            <person name="Hensch T.K."/>
            <person name="Hirokawa N."/>
            <person name="Hill D."/>
            <person name="Huminiecki L."/>
            <person name="Iacono M."/>
            <person name="Ikeo K."/>
            <person name="Iwama A."/>
            <person name="Ishikawa T."/>
            <person name="Jakt M."/>
            <person name="Kanapin A."/>
            <person name="Katoh M."/>
            <person name="Kawasawa Y."/>
            <person name="Kelso J."/>
            <person name="Kitamura H."/>
            <person name="Kitano H."/>
            <person name="Kollias G."/>
            <person name="Krishnan S.P."/>
            <person name="Kruger A."/>
            <person name="Kummerfeld S.K."/>
            <person name="Kurochkin I.V."/>
            <person name="Lareau L.F."/>
            <person name="Lazarevic D."/>
            <person name="Lipovich L."/>
            <person name="Liu J."/>
            <person name="Liuni S."/>
            <person name="McWilliam S."/>
            <person name="Madan Babu M."/>
            <person name="Madera M."/>
            <person name="Marchionni L."/>
            <person name="Matsuda H."/>
            <person name="Matsuzawa S."/>
            <person name="Miki H."/>
            <person name="Mignone F."/>
            <person name="Miyake S."/>
            <person name="Morris K."/>
            <person name="Mottagui-Tabar S."/>
            <person name="Mulder N."/>
            <person name="Nakano N."/>
            <person name="Nakauchi H."/>
            <person name="Ng P."/>
            <person name="Nilsson R."/>
            <person name="Nishiguchi S."/>
            <person name="Nishikawa S."/>
            <person name="Nori F."/>
            <person name="Ohara O."/>
            <person name="Okazaki Y."/>
            <person name="Orlando V."/>
            <person name="Pang K.C."/>
            <person name="Pavan W.J."/>
            <person name="Pavesi G."/>
            <person name="Pesole G."/>
            <person name="Petrovsky N."/>
            <person name="Piazza S."/>
            <person name="Reed J."/>
            <person name="Reid J.F."/>
            <person name="Ring B.Z."/>
            <person name="Ringwald M."/>
            <person name="Rost B."/>
            <person name="Ruan Y."/>
            <person name="Salzberg S.L."/>
            <person name="Sandelin A."/>
            <person name="Schneider C."/>
            <person name="Schoenbach C."/>
            <person name="Sekiguchi K."/>
            <person name="Semple C.A."/>
            <person name="Seno S."/>
            <person name="Sessa L."/>
            <person name="Sheng Y."/>
            <person name="Shibata Y."/>
            <person name="Shimada H."/>
            <person name="Shimada K."/>
            <person name="Silva D."/>
            <person name="Sinclair B."/>
            <person name="Sperling S."/>
            <person name="Stupka E."/>
            <person name="Sugiura K."/>
            <person name="Sultana R."/>
            <person name="Takenaka Y."/>
            <person name="Taki K."/>
            <person name="Tammoja K."/>
            <person name="Tan S.L."/>
            <person name="Tang S."/>
            <person name="Taylor M.S."/>
            <person name="Tegner J."/>
            <person name="Teichmann S.A."/>
            <person name="Ueda H.R."/>
            <person name="van Nimwegen E."/>
            <person name="Verardo R."/>
            <person name="Wei C.L."/>
            <person name="Yagi K."/>
            <person name="Yamanishi H."/>
            <person name="Zabarovsky E."/>
            <person name="Zhu S."/>
            <person name="Zimmer A."/>
            <person name="Hide W."/>
            <person name="Bult C."/>
            <person name="Grimmond S.M."/>
            <person name="Teasdale R.D."/>
            <person name="Liu E.T."/>
            <person name="Brusic V."/>
            <person name="Quackenbush J."/>
            <person name="Wahlestedt C."/>
            <person name="Mattick J.S."/>
            <person name="Hume D.A."/>
            <person name="Kai C."/>
            <person name="Sasaki D."/>
            <person name="Tomaru Y."/>
            <person name="Fukuda S."/>
            <person name="Kanamori-Katayama M."/>
            <person name="Suzuki M."/>
            <person name="Aoki J."/>
            <person name="Arakawa T."/>
            <person name="Iida J."/>
            <person name="Imamura K."/>
            <person name="Itoh M."/>
            <person name="Kato T."/>
            <person name="Kawaji H."/>
            <person name="Kawagashira N."/>
            <person name="Kawashima T."/>
            <person name="Kojima M."/>
            <person name="Kondo S."/>
            <person name="Konno H."/>
            <person name="Nakano K."/>
            <person name="Ninomiya N."/>
            <person name="Nishio T."/>
            <person name="Okada M."/>
            <person name="Plessy C."/>
            <person name="Shibata K."/>
            <person name="Shiraki T."/>
            <person name="Suzuki S."/>
            <person name="Tagami M."/>
            <person name="Waki K."/>
            <person name="Watahiki A."/>
            <person name="Okamura-Oho Y."/>
            <person name="Suzuki H."/>
            <person name="Kawai J."/>
            <person name="Hayashizaki Y."/>
        </authorList>
    </citation>
    <scope>NUCLEOTIDE SEQUENCE [LARGE SCALE MRNA]</scope>
    <source>
        <strain>C57BL/6J</strain>
        <tissue>Diencephalon</tissue>
        <tissue>Head</tissue>
        <tissue>Liver</tissue>
    </source>
</reference>
<reference key="2">
    <citation type="journal article" date="2004" name="Genome Res.">
        <title>The status, quality, and expansion of the NIH full-length cDNA project: the Mammalian Gene Collection (MGC).</title>
        <authorList>
            <consortium name="The MGC Project Team"/>
        </authorList>
    </citation>
    <scope>NUCLEOTIDE SEQUENCE [LARGE SCALE MRNA]</scope>
    <source>
        <tissue>Eye</tissue>
        <tissue>Salivary gland</tissue>
    </source>
</reference>
<reference key="3">
    <citation type="submission" date="2007-03" db="UniProtKB">
        <authorList>
            <person name="Lubec G."/>
            <person name="Klug S."/>
        </authorList>
    </citation>
    <scope>PROTEIN SEQUENCE OF 51-63</scope>
    <scope>IDENTIFICATION BY MASS SPECTROMETRY</scope>
    <source>
        <tissue>Hippocampus</tissue>
    </source>
</reference>
<reference key="4">
    <citation type="journal article" date="2010" name="Cell">
        <title>A tissue-specific atlas of mouse protein phosphorylation and expression.</title>
        <authorList>
            <person name="Huttlin E.L."/>
            <person name="Jedrychowski M.P."/>
            <person name="Elias J.E."/>
            <person name="Goswami T."/>
            <person name="Rad R."/>
            <person name="Beausoleil S.A."/>
            <person name="Villen J."/>
            <person name="Haas W."/>
            <person name="Sowa M.E."/>
            <person name="Gygi S.P."/>
        </authorList>
    </citation>
    <scope>IDENTIFICATION BY MASS SPECTROMETRY [LARGE SCALE ANALYSIS]</scope>
    <source>
        <tissue>Brain</tissue>
        <tissue>Kidney</tissue>
        <tissue>Liver</tissue>
        <tissue>Lung</tissue>
    </source>
</reference>
<gene>
    <name type="primary">Ncald</name>
    <name type="synonym">D15Ertd412e</name>
</gene>
<keyword id="KW-0106">Calcium</keyword>
<keyword id="KW-0903">Direct protein sequencing</keyword>
<keyword id="KW-0449">Lipoprotein</keyword>
<keyword id="KW-0479">Metal-binding</keyword>
<keyword id="KW-0519">Myristate</keyword>
<keyword id="KW-1185">Reference proteome</keyword>
<keyword id="KW-0677">Repeat</keyword>
<accession>Q91X97</accession>
<accession>Q3TJS9</accession>
<accession>Q8BZN9</accession>
<name>NCALD_MOUSE</name>
<sequence length="193" mass="22245">MGKQNSKLRPEVMQDLLESTDFTEHEIQEWYKGFLRDCPSGHLSMEEFKKIYGNFFPYGDASKFAEHVFRTFDANGDGTIDFREFIIALSVTSRGKLEQKLKWAFSMYDLDGNGYISKAEMLEIVQAIYKMVSSVMKMPEDESTPEKRTEKIFRQMDTNRDGKLSLEEFIRGAKSDPSIVRLLQCDPSSAGQF</sequence>